<protein>
    <recommendedName>
        <fullName evidence="1">Ribosome-recycling factor</fullName>
        <shortName evidence="1">RRF</shortName>
    </recommendedName>
    <alternativeName>
        <fullName evidence="1">Ribosome-releasing factor</fullName>
    </alternativeName>
</protein>
<dbReference type="EMBL" id="CP000967">
    <property type="protein sequence ID" value="ACD59563.1"/>
    <property type="molecule type" value="Genomic_DNA"/>
</dbReference>
<dbReference type="RefSeq" id="WP_011258697.1">
    <property type="nucleotide sequence ID" value="NC_010717.2"/>
</dbReference>
<dbReference type="SMR" id="B2SR02"/>
<dbReference type="GeneID" id="77336855"/>
<dbReference type="KEGG" id="xop:PXO_01128"/>
<dbReference type="eggNOG" id="COG0233">
    <property type="taxonomic scope" value="Bacteria"/>
</dbReference>
<dbReference type="HOGENOM" id="CLU_073981_2_0_6"/>
<dbReference type="Proteomes" id="UP000001740">
    <property type="component" value="Chromosome"/>
</dbReference>
<dbReference type="GO" id="GO:0005829">
    <property type="term" value="C:cytosol"/>
    <property type="evidence" value="ECO:0007669"/>
    <property type="project" value="GOC"/>
</dbReference>
<dbReference type="GO" id="GO:0043023">
    <property type="term" value="F:ribosomal large subunit binding"/>
    <property type="evidence" value="ECO:0007669"/>
    <property type="project" value="TreeGrafter"/>
</dbReference>
<dbReference type="GO" id="GO:0002184">
    <property type="term" value="P:cytoplasmic translational termination"/>
    <property type="evidence" value="ECO:0007669"/>
    <property type="project" value="TreeGrafter"/>
</dbReference>
<dbReference type="CDD" id="cd00520">
    <property type="entry name" value="RRF"/>
    <property type="match status" value="1"/>
</dbReference>
<dbReference type="FunFam" id="1.10.132.20:FF:000001">
    <property type="entry name" value="Ribosome-recycling factor"/>
    <property type="match status" value="1"/>
</dbReference>
<dbReference type="FunFam" id="3.30.1360.40:FF:000001">
    <property type="entry name" value="Ribosome-recycling factor"/>
    <property type="match status" value="1"/>
</dbReference>
<dbReference type="Gene3D" id="3.30.1360.40">
    <property type="match status" value="1"/>
</dbReference>
<dbReference type="Gene3D" id="1.10.132.20">
    <property type="entry name" value="Ribosome-recycling factor"/>
    <property type="match status" value="1"/>
</dbReference>
<dbReference type="HAMAP" id="MF_00040">
    <property type="entry name" value="RRF"/>
    <property type="match status" value="1"/>
</dbReference>
<dbReference type="InterPro" id="IPR002661">
    <property type="entry name" value="Ribosome_recyc_fac"/>
</dbReference>
<dbReference type="InterPro" id="IPR023584">
    <property type="entry name" value="Ribosome_recyc_fac_dom"/>
</dbReference>
<dbReference type="InterPro" id="IPR036191">
    <property type="entry name" value="RRF_sf"/>
</dbReference>
<dbReference type="NCBIfam" id="TIGR00496">
    <property type="entry name" value="frr"/>
    <property type="match status" value="1"/>
</dbReference>
<dbReference type="PANTHER" id="PTHR20982:SF3">
    <property type="entry name" value="MITOCHONDRIAL RIBOSOME RECYCLING FACTOR PSEUDO 1"/>
    <property type="match status" value="1"/>
</dbReference>
<dbReference type="PANTHER" id="PTHR20982">
    <property type="entry name" value="RIBOSOME RECYCLING FACTOR"/>
    <property type="match status" value="1"/>
</dbReference>
<dbReference type="Pfam" id="PF01765">
    <property type="entry name" value="RRF"/>
    <property type="match status" value="1"/>
</dbReference>
<dbReference type="SUPFAM" id="SSF55194">
    <property type="entry name" value="Ribosome recycling factor, RRF"/>
    <property type="match status" value="1"/>
</dbReference>
<accession>B2SR02</accession>
<organism>
    <name type="scientific">Xanthomonas oryzae pv. oryzae (strain PXO99A)</name>
    <dbReference type="NCBI Taxonomy" id="360094"/>
    <lineage>
        <taxon>Bacteria</taxon>
        <taxon>Pseudomonadati</taxon>
        <taxon>Pseudomonadota</taxon>
        <taxon>Gammaproteobacteria</taxon>
        <taxon>Lysobacterales</taxon>
        <taxon>Lysobacteraceae</taxon>
        <taxon>Xanthomonas</taxon>
    </lineage>
</organism>
<evidence type="ECO:0000255" key="1">
    <source>
        <dbReference type="HAMAP-Rule" id="MF_00040"/>
    </source>
</evidence>
<reference key="1">
    <citation type="journal article" date="2008" name="BMC Genomics">
        <title>Genome sequence and rapid evolution of the rice pathogen Xanthomonas oryzae pv. oryzae PXO99A.</title>
        <authorList>
            <person name="Salzberg S.L."/>
            <person name="Sommer D.D."/>
            <person name="Schatz M.C."/>
            <person name="Phillippy A.M."/>
            <person name="Rabinowicz P.D."/>
            <person name="Tsuge S."/>
            <person name="Furutani A."/>
            <person name="Ochiai H."/>
            <person name="Delcher A.L."/>
            <person name="Kelley D."/>
            <person name="Madupu R."/>
            <person name="Puiu D."/>
            <person name="Radune D."/>
            <person name="Shumway M."/>
            <person name="Trapnell C."/>
            <person name="Aparna G."/>
            <person name="Jha G."/>
            <person name="Pandey A."/>
            <person name="Patil P.B."/>
            <person name="Ishihara H."/>
            <person name="Meyer D.F."/>
            <person name="Szurek B."/>
            <person name="Verdier V."/>
            <person name="Koebnik R."/>
            <person name="Dow J.M."/>
            <person name="Ryan R.P."/>
            <person name="Hirata H."/>
            <person name="Tsuyumu S."/>
            <person name="Won Lee S."/>
            <person name="Seo Y.-S."/>
            <person name="Sriariyanum M."/>
            <person name="Ronald P.C."/>
            <person name="Sonti R.V."/>
            <person name="Van Sluys M.-A."/>
            <person name="Leach J.E."/>
            <person name="White F.F."/>
            <person name="Bogdanove A.J."/>
        </authorList>
    </citation>
    <scope>NUCLEOTIDE SEQUENCE [LARGE SCALE GENOMIC DNA]</scope>
    <source>
        <strain>PXO99A</strain>
    </source>
</reference>
<keyword id="KW-0963">Cytoplasm</keyword>
<keyword id="KW-0648">Protein biosynthesis</keyword>
<feature type="chain" id="PRO_1000090804" description="Ribosome-recycling factor">
    <location>
        <begin position="1"/>
        <end position="185"/>
    </location>
</feature>
<name>RRF_XANOP</name>
<comment type="function">
    <text evidence="1">Responsible for the release of ribosomes from messenger RNA at the termination of protein biosynthesis. May increase the efficiency of translation by recycling ribosomes from one round of translation to another.</text>
</comment>
<comment type="subcellular location">
    <subcellularLocation>
        <location evidence="1">Cytoplasm</location>
    </subcellularLocation>
</comment>
<comment type="similarity">
    <text evidence="1">Belongs to the RRF family.</text>
</comment>
<sequence length="185" mass="20352">MLTQIKQDAQTRMTKSIDALRHSLTTVRTGRASPALLDGIKVKAYGTDTPLNQVASISVSEGRSLVISLFDKGMIKDVEKAIYASDLGLTPTVVGTVIRLNLPPLTEERRKELSKSVHGEGEDSKVAIRNIRRDANQQVKDLLKDKAVTEDEARGAEDDIQKLTDKAIKDVDEVVKAKEQELMTV</sequence>
<gene>
    <name evidence="1" type="primary">frr</name>
    <name type="ordered locus">PXO_01128</name>
</gene>
<proteinExistence type="inferred from homology"/>